<evidence type="ECO:0000255" key="1">
    <source>
        <dbReference type="HAMAP-Rule" id="MF_00530"/>
    </source>
</evidence>
<dbReference type="EMBL" id="X66939">
    <property type="protein sequence ID" value="CAA47371.1"/>
    <property type="molecule type" value="Genomic_DNA"/>
</dbReference>
<dbReference type="PIR" id="S22510">
    <property type="entry name" value="S22510"/>
</dbReference>
<dbReference type="SMR" id="P30159"/>
<dbReference type="GO" id="GO:0009535">
    <property type="term" value="C:chloroplast thylakoid membrane"/>
    <property type="evidence" value="ECO:0007669"/>
    <property type="project" value="UniProtKB-SubCell"/>
</dbReference>
<dbReference type="GO" id="GO:0045259">
    <property type="term" value="C:proton-transporting ATP synthase complex"/>
    <property type="evidence" value="ECO:0007669"/>
    <property type="project" value="UniProtKB-KW"/>
</dbReference>
<dbReference type="GO" id="GO:0005524">
    <property type="term" value="F:ATP binding"/>
    <property type="evidence" value="ECO:0007669"/>
    <property type="project" value="UniProtKB-UniRule"/>
</dbReference>
<dbReference type="GO" id="GO:0046933">
    <property type="term" value="F:proton-transporting ATP synthase activity, rotational mechanism"/>
    <property type="evidence" value="ECO:0007669"/>
    <property type="project" value="UniProtKB-UniRule"/>
</dbReference>
<dbReference type="CDD" id="cd12152">
    <property type="entry name" value="F1-ATPase_delta"/>
    <property type="match status" value="1"/>
</dbReference>
<dbReference type="Gene3D" id="2.60.15.10">
    <property type="entry name" value="F0F1 ATP synthase delta/epsilon subunit, N-terminal"/>
    <property type="match status" value="1"/>
</dbReference>
<dbReference type="HAMAP" id="MF_00530">
    <property type="entry name" value="ATP_synth_epsil_bac"/>
    <property type="match status" value="1"/>
</dbReference>
<dbReference type="InterPro" id="IPR001469">
    <property type="entry name" value="ATP_synth_F1_dsu/esu"/>
</dbReference>
<dbReference type="InterPro" id="IPR020546">
    <property type="entry name" value="ATP_synth_F1_dsu/esu_N"/>
</dbReference>
<dbReference type="InterPro" id="IPR036771">
    <property type="entry name" value="ATPsynth_dsu/esu_N"/>
</dbReference>
<dbReference type="PANTHER" id="PTHR13822">
    <property type="entry name" value="ATP SYNTHASE DELTA/EPSILON CHAIN"/>
    <property type="match status" value="1"/>
</dbReference>
<dbReference type="PANTHER" id="PTHR13822:SF10">
    <property type="entry name" value="ATP SYNTHASE EPSILON CHAIN, CHLOROPLASTIC"/>
    <property type="match status" value="1"/>
</dbReference>
<dbReference type="Pfam" id="PF02823">
    <property type="entry name" value="ATP-synt_DE_N"/>
    <property type="match status" value="1"/>
</dbReference>
<dbReference type="SUPFAM" id="SSF51344">
    <property type="entry name" value="Epsilon subunit of F1F0-ATP synthase N-terminal domain"/>
    <property type="match status" value="1"/>
</dbReference>
<reference key="1">
    <citation type="journal article" date="1992" name="Plant Mol. Biol.">
        <title>Nucleotide sequence and phylogenetic implication of the ATPase subunits beta and epsilon encoded in the chloroplast genome of the brown alga Dictyota dichotoma.</title>
        <authorList>
            <person name="Leitsch C.E.W."/>
            <person name="Kowallik K.V."/>
        </authorList>
    </citation>
    <scope>NUCLEOTIDE SEQUENCE [GENOMIC DNA]</scope>
</reference>
<name>ATPE_DICDH</name>
<feature type="chain" id="PRO_0000188263" description="ATP synthase epsilon chain, chloroplastic">
    <location>
        <begin position="1"/>
        <end position="139"/>
    </location>
</feature>
<accession>P30159</accession>
<gene>
    <name evidence="1" type="primary">atpE</name>
</gene>
<sequence length="139" mass="15295">MSINIRIVTPTGFLWETKAEEILLPSTTAPLIVLPGHINILTGLSPGLLRVKVDSRWKPILISSGAAQILTSDSTNVDVGIMEVEEIKQENFKEAELLLEKANDALNIINPIDIRERIKAGEAKSFAESRVEAFKFLAT</sequence>
<organism>
    <name type="scientific">Dictyota dichotoma</name>
    <dbReference type="NCBI Taxonomy" id="2876"/>
    <lineage>
        <taxon>Eukaryota</taxon>
        <taxon>Sar</taxon>
        <taxon>Stramenopiles</taxon>
        <taxon>Ochrophyta</taxon>
        <taxon>PX clade</taxon>
        <taxon>Phaeophyceae</taxon>
        <taxon>Dictyotales</taxon>
        <taxon>Dictyotaceae</taxon>
        <taxon>Dictyota</taxon>
    </lineage>
</organism>
<geneLocation type="chloroplast"/>
<protein>
    <recommendedName>
        <fullName evidence="1">ATP synthase epsilon chain, chloroplastic</fullName>
    </recommendedName>
    <alternativeName>
        <fullName evidence="1">ATP synthase F1 sector epsilon subunit</fullName>
    </alternativeName>
    <alternativeName>
        <fullName evidence="1">F-ATPase epsilon subunit</fullName>
    </alternativeName>
</protein>
<proteinExistence type="inferred from homology"/>
<comment type="function">
    <text evidence="1">Produces ATP from ADP in the presence of a proton gradient across the membrane.</text>
</comment>
<comment type="subunit">
    <text evidence="1">F-type ATPases have 2 components, CF(1) - the catalytic core - and CF(0) - the membrane proton channel. CF(1) has five subunits: alpha(3), beta(3), gamma(1), delta(1), epsilon(1). CF(0) has three main subunits: a, b and c.</text>
</comment>
<comment type="subcellular location">
    <subcellularLocation>
        <location evidence="1">Plastid</location>
        <location evidence="1">Chloroplast thylakoid membrane</location>
        <topology evidence="1">Peripheral membrane protein</topology>
    </subcellularLocation>
</comment>
<comment type="similarity">
    <text evidence="1">Belongs to the ATPase epsilon chain family.</text>
</comment>
<keyword id="KW-0066">ATP synthesis</keyword>
<keyword id="KW-0139">CF(1)</keyword>
<keyword id="KW-0150">Chloroplast</keyword>
<keyword id="KW-0375">Hydrogen ion transport</keyword>
<keyword id="KW-0406">Ion transport</keyword>
<keyword id="KW-0472">Membrane</keyword>
<keyword id="KW-0934">Plastid</keyword>
<keyword id="KW-0793">Thylakoid</keyword>
<keyword id="KW-0813">Transport</keyword>